<accession>Q2JIF7</accession>
<evidence type="ECO:0000255" key="1">
    <source>
        <dbReference type="HAMAP-Rule" id="MF_01399"/>
    </source>
</evidence>
<reference key="1">
    <citation type="journal article" date="2007" name="ISME J.">
        <title>Population level functional diversity in a microbial community revealed by comparative genomic and metagenomic analyses.</title>
        <authorList>
            <person name="Bhaya D."/>
            <person name="Grossman A.R."/>
            <person name="Steunou A.-S."/>
            <person name="Khuri N."/>
            <person name="Cohan F.M."/>
            <person name="Hamamura N."/>
            <person name="Melendrez M.C."/>
            <person name="Bateson M.M."/>
            <person name="Ward D.M."/>
            <person name="Heidelberg J.F."/>
        </authorList>
    </citation>
    <scope>NUCLEOTIDE SEQUENCE [LARGE SCALE GENOMIC DNA]</scope>
    <source>
        <strain>JA-2-3B'a(2-13)</strain>
    </source>
</reference>
<keyword id="KW-0066">ATP synthesis</keyword>
<keyword id="KW-0138">CF(0)</keyword>
<keyword id="KW-0375">Hydrogen ion transport</keyword>
<keyword id="KW-0406">Ion transport</keyword>
<keyword id="KW-0472">Membrane</keyword>
<keyword id="KW-1185">Reference proteome</keyword>
<keyword id="KW-0793">Thylakoid</keyword>
<keyword id="KW-0812">Transmembrane</keyword>
<keyword id="KW-1133">Transmembrane helix</keyword>
<keyword id="KW-0813">Transport</keyword>
<proteinExistence type="inferred from homology"/>
<comment type="function">
    <text evidence="1">F(1)F(0) ATP synthase produces ATP from ADP in the presence of a proton or sodium gradient. F-type ATPases consist of two structural domains, F(1) containing the extramembraneous catalytic core and F(0) containing the membrane proton channel, linked together by a central stalk and a peripheral stalk. During catalysis, ATP synthesis in the catalytic domain of F(1) is coupled via a rotary mechanism of the central stalk subunits to proton translocation.</text>
</comment>
<comment type="function">
    <text evidence="1">Component of the F(0) channel, it forms part of the peripheral stalk, linking F(1) to F(0). The b'-subunit is a diverged and duplicated form of b found in plants and photosynthetic bacteria.</text>
</comment>
<comment type="subunit">
    <text evidence="1">F-type ATPases have 2 components, F(1) - the catalytic core - and F(0) - the membrane proton channel. F(1) has five subunits: alpha(3), beta(3), gamma(1), delta(1), epsilon(1). F(0) has four main subunits: a(1), b(1), b'(1) and c(10-14). The alpha and beta chains form an alternating ring which encloses part of the gamma chain. F(1) is attached to F(0) by a central stalk formed by the gamma and epsilon chains, while a peripheral stalk is formed by the delta, b and b' chains.</text>
</comment>
<comment type="subcellular location">
    <subcellularLocation>
        <location evidence="1">Cellular thylakoid membrane</location>
        <topology evidence="1">Single-pass membrane protein</topology>
    </subcellularLocation>
</comment>
<comment type="similarity">
    <text evidence="1">Belongs to the ATPase B chain family.</text>
</comment>
<protein>
    <recommendedName>
        <fullName evidence="1">ATP synthase subunit b'</fullName>
    </recommendedName>
    <alternativeName>
        <fullName evidence="1">ATP synthase F(0) sector subunit b'</fullName>
    </alternativeName>
    <alternativeName>
        <fullName evidence="1">ATPase subunit II</fullName>
    </alternativeName>
    <alternativeName>
        <fullName evidence="1">F-type ATPase subunit b'</fullName>
        <shortName evidence="1">F-ATPase subunit b'</shortName>
    </alternativeName>
</protein>
<sequence>MFFPTLLAVEAAEKGGLFDLDATLPLIAIQFLLLVAVLNSLFYEPVTRAIDSRNDYIRTTQAEAQERLDKAVSLTRQYESEISQARLQAQQVIAEAEAAAARIRSEKLAAVQAEIQQKLEAARLQVEQEKQAALEQLQQQVDAIAAQITQKLLGSAR</sequence>
<gene>
    <name evidence="1" type="primary">atpF2</name>
    <name evidence="1" type="synonym">atpG</name>
    <name type="ordered locus">CYB_2676</name>
</gene>
<organism>
    <name type="scientific">Synechococcus sp. (strain JA-2-3B'a(2-13))</name>
    <name type="common">Cyanobacteria bacterium Yellowstone B-Prime</name>
    <dbReference type="NCBI Taxonomy" id="321332"/>
    <lineage>
        <taxon>Bacteria</taxon>
        <taxon>Bacillati</taxon>
        <taxon>Cyanobacteriota</taxon>
        <taxon>Cyanophyceae</taxon>
        <taxon>Synechococcales</taxon>
        <taxon>Synechococcaceae</taxon>
        <taxon>Synechococcus</taxon>
    </lineage>
</organism>
<name>ATPF2_SYNJB</name>
<dbReference type="EMBL" id="CP000240">
    <property type="protein sequence ID" value="ABD03602.1"/>
    <property type="molecule type" value="Genomic_DNA"/>
</dbReference>
<dbReference type="RefSeq" id="WP_011434221.1">
    <property type="nucleotide sequence ID" value="NC_007776.1"/>
</dbReference>
<dbReference type="SMR" id="Q2JIF7"/>
<dbReference type="STRING" id="321332.CYB_2676"/>
<dbReference type="KEGG" id="cyb:CYB_2676"/>
<dbReference type="eggNOG" id="COG0711">
    <property type="taxonomic scope" value="Bacteria"/>
</dbReference>
<dbReference type="HOGENOM" id="CLU_079215_9_0_3"/>
<dbReference type="OrthoDB" id="426571at2"/>
<dbReference type="Proteomes" id="UP000001938">
    <property type="component" value="Chromosome"/>
</dbReference>
<dbReference type="GO" id="GO:0031676">
    <property type="term" value="C:plasma membrane-derived thylakoid membrane"/>
    <property type="evidence" value="ECO:0007669"/>
    <property type="project" value="UniProtKB-SubCell"/>
</dbReference>
<dbReference type="GO" id="GO:0045259">
    <property type="term" value="C:proton-transporting ATP synthase complex"/>
    <property type="evidence" value="ECO:0007669"/>
    <property type="project" value="UniProtKB-KW"/>
</dbReference>
<dbReference type="GO" id="GO:0046933">
    <property type="term" value="F:proton-transporting ATP synthase activity, rotational mechanism"/>
    <property type="evidence" value="ECO:0007669"/>
    <property type="project" value="UniProtKB-UniRule"/>
</dbReference>
<dbReference type="GO" id="GO:0046961">
    <property type="term" value="F:proton-transporting ATPase activity, rotational mechanism"/>
    <property type="evidence" value="ECO:0007669"/>
    <property type="project" value="TreeGrafter"/>
</dbReference>
<dbReference type="CDD" id="cd06503">
    <property type="entry name" value="ATP-synt_Fo_b"/>
    <property type="match status" value="1"/>
</dbReference>
<dbReference type="HAMAP" id="MF_01398">
    <property type="entry name" value="ATP_synth_b_bprime"/>
    <property type="match status" value="1"/>
</dbReference>
<dbReference type="HAMAP" id="MF_01399">
    <property type="entry name" value="ATP_synth_bprime"/>
    <property type="match status" value="1"/>
</dbReference>
<dbReference type="InterPro" id="IPR034679">
    <property type="entry name" value="ATP_synth_b"/>
</dbReference>
<dbReference type="InterPro" id="IPR002146">
    <property type="entry name" value="ATP_synth_b/b'su_bac/chlpt"/>
</dbReference>
<dbReference type="InterPro" id="IPR050059">
    <property type="entry name" value="ATP_synthase_B_chain"/>
</dbReference>
<dbReference type="NCBIfam" id="NF005607">
    <property type="entry name" value="PRK07353.1"/>
    <property type="match status" value="1"/>
</dbReference>
<dbReference type="PANTHER" id="PTHR33445">
    <property type="entry name" value="ATP SYNTHASE SUBUNIT B', CHLOROPLASTIC"/>
    <property type="match status" value="1"/>
</dbReference>
<dbReference type="PANTHER" id="PTHR33445:SF2">
    <property type="entry name" value="ATP SYNTHASE SUBUNIT B', CHLOROPLASTIC"/>
    <property type="match status" value="1"/>
</dbReference>
<dbReference type="Pfam" id="PF00430">
    <property type="entry name" value="ATP-synt_B"/>
    <property type="match status" value="1"/>
</dbReference>
<feature type="chain" id="PRO_0000369053" description="ATP synthase subunit b'">
    <location>
        <begin position="1"/>
        <end position="157"/>
    </location>
</feature>
<feature type="transmembrane region" description="Helical" evidence="1">
    <location>
        <begin position="22"/>
        <end position="42"/>
    </location>
</feature>